<feature type="chain" id="PRO_0000141031" description="Thymidylate synthase">
    <location>
        <begin position="1"/>
        <end position="279"/>
    </location>
</feature>
<feature type="active site" description="Nucleophile" evidence="1">
    <location>
        <position position="154"/>
    </location>
</feature>
<feature type="binding site" evidence="1">
    <location>
        <begin position="133"/>
        <end position="134"/>
    </location>
    <ligand>
        <name>dUMP</name>
        <dbReference type="ChEBI" id="CHEBI:246422"/>
        <note>ligand shared between dimeric partners</note>
    </ligand>
</feature>
<feature type="binding site" description="in other chain" evidence="1">
    <location>
        <begin position="178"/>
        <end position="181"/>
    </location>
    <ligand>
        <name>dUMP</name>
        <dbReference type="ChEBI" id="CHEBI:246422"/>
        <note>ligand shared between dimeric partners</note>
    </ligand>
</feature>
<feature type="binding site" evidence="1">
    <location>
        <position position="181"/>
    </location>
    <ligand>
        <name>(6R)-5,10-methylene-5,6,7,8-tetrahydrofolate</name>
        <dbReference type="ChEBI" id="CHEBI:15636"/>
    </ligand>
</feature>
<feature type="binding site" description="in other chain" evidence="1">
    <location>
        <position position="189"/>
    </location>
    <ligand>
        <name>dUMP</name>
        <dbReference type="ChEBI" id="CHEBI:246422"/>
        <note>ligand shared between dimeric partners</note>
    </ligand>
</feature>
<feature type="binding site" description="in other chain" evidence="1">
    <location>
        <begin position="219"/>
        <end position="221"/>
    </location>
    <ligand>
        <name>dUMP</name>
        <dbReference type="ChEBI" id="CHEBI:246422"/>
        <note>ligand shared between dimeric partners</note>
    </ligand>
</feature>
<feature type="binding site" evidence="1">
    <location>
        <position position="278"/>
    </location>
    <ligand>
        <name>(6R)-5,10-methylene-5,6,7,8-tetrahydrofolate</name>
        <dbReference type="ChEBI" id="CHEBI:15636"/>
    </ligand>
</feature>
<comment type="function">
    <text evidence="1">Catalyzes the reductive methylation of 2'-deoxyuridine-5'-monophosphate (dUMP) to 2'-deoxythymidine-5'-monophosphate (dTMP) while utilizing 5,10-methylenetetrahydrofolate (mTHF) as the methyl donor and reductant in the reaction, yielding dihydrofolate (DHF) as a by-product. This enzymatic reaction provides an intracellular de novo source of dTMP, an essential precursor for DNA biosynthesis.</text>
</comment>
<comment type="catalytic activity">
    <reaction evidence="1">
        <text>dUMP + (6R)-5,10-methylene-5,6,7,8-tetrahydrofolate = 7,8-dihydrofolate + dTMP</text>
        <dbReference type="Rhea" id="RHEA:12104"/>
        <dbReference type="ChEBI" id="CHEBI:15636"/>
        <dbReference type="ChEBI" id="CHEBI:57451"/>
        <dbReference type="ChEBI" id="CHEBI:63528"/>
        <dbReference type="ChEBI" id="CHEBI:246422"/>
        <dbReference type="EC" id="2.1.1.45"/>
    </reaction>
</comment>
<comment type="pathway">
    <text evidence="1">Pyrimidine metabolism; dTTP biosynthesis.</text>
</comment>
<comment type="subunit">
    <text evidence="1">Homodimer.</text>
</comment>
<comment type="subcellular location">
    <subcellularLocation>
        <location evidence="1">Cytoplasm</location>
    </subcellularLocation>
</comment>
<comment type="similarity">
    <text evidence="1">Belongs to the thymidylate synthase family. Bacterial-type ThyA subfamily.</text>
</comment>
<name>TYSY_STRR6</name>
<keyword id="KW-0963">Cytoplasm</keyword>
<keyword id="KW-0489">Methyltransferase</keyword>
<keyword id="KW-0545">Nucleotide biosynthesis</keyword>
<keyword id="KW-1185">Reference proteome</keyword>
<keyword id="KW-0808">Transferase</keyword>
<proteinExistence type="inferred from homology"/>
<gene>
    <name evidence="1" type="primary">thyA</name>
    <name type="ordered locus">spr0585</name>
</gene>
<reference key="1">
    <citation type="journal article" date="2001" name="J. Bacteriol.">
        <title>Genome of the bacterium Streptococcus pneumoniae strain R6.</title>
        <authorList>
            <person name="Hoskins J."/>
            <person name="Alborn W.E. Jr."/>
            <person name="Arnold J."/>
            <person name="Blaszczak L.C."/>
            <person name="Burgett S."/>
            <person name="DeHoff B.S."/>
            <person name="Estrem S.T."/>
            <person name="Fritz L."/>
            <person name="Fu D.-J."/>
            <person name="Fuller W."/>
            <person name="Geringer C."/>
            <person name="Gilmour R."/>
            <person name="Glass J.S."/>
            <person name="Khoja H."/>
            <person name="Kraft A.R."/>
            <person name="Lagace R.E."/>
            <person name="LeBlanc D.J."/>
            <person name="Lee L.N."/>
            <person name="Lefkowitz E.J."/>
            <person name="Lu J."/>
            <person name="Matsushima P."/>
            <person name="McAhren S.M."/>
            <person name="McHenney M."/>
            <person name="McLeaster K."/>
            <person name="Mundy C.W."/>
            <person name="Nicas T.I."/>
            <person name="Norris F.H."/>
            <person name="O'Gara M."/>
            <person name="Peery R.B."/>
            <person name="Robertson G.T."/>
            <person name="Rockey P."/>
            <person name="Sun P.-M."/>
            <person name="Winkler M.E."/>
            <person name="Yang Y."/>
            <person name="Young-Bellido M."/>
            <person name="Zhao G."/>
            <person name="Zook C.A."/>
            <person name="Baltz R.H."/>
            <person name="Jaskunas S.R."/>
            <person name="Rosteck P.R. Jr."/>
            <person name="Skatrud P.L."/>
            <person name="Glass J.I."/>
        </authorList>
    </citation>
    <scope>NUCLEOTIDE SEQUENCE [LARGE SCALE GENOMIC DNA]</scope>
    <source>
        <strain>ATCC BAA-255 / R6</strain>
    </source>
</reference>
<organism>
    <name type="scientific">Streptococcus pneumoniae (strain ATCC BAA-255 / R6)</name>
    <dbReference type="NCBI Taxonomy" id="171101"/>
    <lineage>
        <taxon>Bacteria</taxon>
        <taxon>Bacillati</taxon>
        <taxon>Bacillota</taxon>
        <taxon>Bacilli</taxon>
        <taxon>Lactobacillales</taxon>
        <taxon>Streptococcaceae</taxon>
        <taxon>Streptococcus</taxon>
    </lineage>
</organism>
<sequence length="279" mass="32554">MTKADTIFKENIERILKEGVFSEQARPKYKDGTVANSKYVTGAFSEYDLSKGEFPITTLRPIAIKSAIKEVLWIYQDQSNSLEVLNDKYNVHYWNDWEVGDTGTIGERYGAVVKKHDIINKLLKQLETNPWNRRNIISLWDYQAFEETDGLLPCAFQTMFDVRRVDGEIYLDATLTQRSNDMLVAHHINAMQYVALQMMIAKHFGWKVGKFFYFINNLHIYDNQFEQAQELLRREPSNCQPRLVLNVPDGTNFFDIKAEDFELVDYDPVKPQLKFDLAI</sequence>
<evidence type="ECO:0000255" key="1">
    <source>
        <dbReference type="HAMAP-Rule" id="MF_00008"/>
    </source>
</evidence>
<protein>
    <recommendedName>
        <fullName evidence="1">Thymidylate synthase</fullName>
        <shortName evidence="1">TS</shortName>
        <shortName evidence="1">TSase</shortName>
        <ecNumber evidence="1">2.1.1.45</ecNumber>
    </recommendedName>
</protein>
<accession>P67050</accession>
<accession>Q97RW7</accession>
<dbReference type="EC" id="2.1.1.45" evidence="1"/>
<dbReference type="EMBL" id="AE007317">
    <property type="protein sequence ID" value="AAK99389.1"/>
    <property type="molecule type" value="Genomic_DNA"/>
</dbReference>
<dbReference type="PIR" id="A97945">
    <property type="entry name" value="A97945"/>
</dbReference>
<dbReference type="RefSeq" id="NP_358179.1">
    <property type="nucleotide sequence ID" value="NC_003098.1"/>
</dbReference>
<dbReference type="RefSeq" id="WP_000158639.1">
    <property type="nucleotide sequence ID" value="NC_003098.1"/>
</dbReference>
<dbReference type="SMR" id="P67050"/>
<dbReference type="STRING" id="171101.spr0585"/>
<dbReference type="KEGG" id="spr:spr0585"/>
<dbReference type="PATRIC" id="fig|171101.6.peg.653"/>
<dbReference type="eggNOG" id="COG0207">
    <property type="taxonomic scope" value="Bacteria"/>
</dbReference>
<dbReference type="HOGENOM" id="CLU_021669_0_0_9"/>
<dbReference type="UniPathway" id="UPA00575"/>
<dbReference type="Proteomes" id="UP000000586">
    <property type="component" value="Chromosome"/>
</dbReference>
<dbReference type="GO" id="GO:0005829">
    <property type="term" value="C:cytosol"/>
    <property type="evidence" value="ECO:0000318"/>
    <property type="project" value="GO_Central"/>
</dbReference>
<dbReference type="GO" id="GO:0004799">
    <property type="term" value="F:thymidylate synthase activity"/>
    <property type="evidence" value="ECO:0000318"/>
    <property type="project" value="GO_Central"/>
</dbReference>
<dbReference type="GO" id="GO:0006231">
    <property type="term" value="P:dTMP biosynthetic process"/>
    <property type="evidence" value="ECO:0000318"/>
    <property type="project" value="GO_Central"/>
</dbReference>
<dbReference type="GO" id="GO:0006235">
    <property type="term" value="P:dTTP biosynthetic process"/>
    <property type="evidence" value="ECO:0007669"/>
    <property type="project" value="UniProtKB-UniRule"/>
</dbReference>
<dbReference type="GO" id="GO:0032259">
    <property type="term" value="P:methylation"/>
    <property type="evidence" value="ECO:0007669"/>
    <property type="project" value="UniProtKB-KW"/>
</dbReference>
<dbReference type="CDD" id="cd00351">
    <property type="entry name" value="TS_Pyrimidine_HMase"/>
    <property type="match status" value="1"/>
</dbReference>
<dbReference type="FunFam" id="3.30.572.10:FF:000006">
    <property type="entry name" value="Thymidylate synthase"/>
    <property type="match status" value="1"/>
</dbReference>
<dbReference type="Gene3D" id="3.30.572.10">
    <property type="entry name" value="Thymidylate synthase/dCMP hydroxymethylase domain"/>
    <property type="match status" value="1"/>
</dbReference>
<dbReference type="HAMAP" id="MF_00008">
    <property type="entry name" value="Thymidy_synth_bact"/>
    <property type="match status" value="1"/>
</dbReference>
<dbReference type="InterPro" id="IPR045097">
    <property type="entry name" value="Thymidate_synth/dCMP_Mease"/>
</dbReference>
<dbReference type="InterPro" id="IPR023451">
    <property type="entry name" value="Thymidate_synth/dCMP_Mease_dom"/>
</dbReference>
<dbReference type="InterPro" id="IPR036926">
    <property type="entry name" value="Thymidate_synth/dCMP_Mease_sf"/>
</dbReference>
<dbReference type="InterPro" id="IPR000398">
    <property type="entry name" value="Thymidylate_synthase"/>
</dbReference>
<dbReference type="InterPro" id="IPR020940">
    <property type="entry name" value="Thymidylate_synthase_AS"/>
</dbReference>
<dbReference type="NCBIfam" id="NF002495">
    <property type="entry name" value="PRK01827.1-1"/>
    <property type="match status" value="1"/>
</dbReference>
<dbReference type="PANTHER" id="PTHR11548">
    <property type="entry name" value="THYMIDYLATE SYNTHASE 1"/>
    <property type="match status" value="1"/>
</dbReference>
<dbReference type="PANTHER" id="PTHR11548:SF1">
    <property type="entry name" value="THYMIDYLATE SYNTHASE 1"/>
    <property type="match status" value="1"/>
</dbReference>
<dbReference type="Pfam" id="PF00303">
    <property type="entry name" value="Thymidylat_synt"/>
    <property type="match status" value="1"/>
</dbReference>
<dbReference type="PRINTS" id="PR00108">
    <property type="entry name" value="THYMDSNTHASE"/>
</dbReference>
<dbReference type="SUPFAM" id="SSF55831">
    <property type="entry name" value="Thymidylate synthase/dCMP hydroxymethylase"/>
    <property type="match status" value="1"/>
</dbReference>
<dbReference type="PROSITE" id="PS00091">
    <property type="entry name" value="THYMIDYLATE_SYNTHASE"/>
    <property type="match status" value="1"/>
</dbReference>